<comment type="function">
    <text evidence="2">Component of the ubiquinol-cytochrome c reductase complex (complex III or cytochrome b-c1 complex) that is part of the mitochondrial respiratory chain. The b-c1 complex mediates electron transfer from ubiquinol to cytochrome c. Contributes to the generation of a proton gradient across the mitochondrial membrane that is then used for ATP synthesis.</text>
</comment>
<comment type="cofactor">
    <cofactor evidence="2">
        <name>heme b</name>
        <dbReference type="ChEBI" id="CHEBI:60344"/>
    </cofactor>
    <text evidence="2">Binds 2 heme b groups non-covalently.</text>
</comment>
<comment type="subunit">
    <text evidence="2">The cytochrome bc1 complex contains 11 subunits: 3 respiratory subunits (MT-CYB, CYC1 and UQCRFS1), 2 core proteins (UQCRC1 and UQCRC2) and 6 low-molecular weight proteins (UQCRH/QCR6, UQCRB/QCR7, UQCRQ/QCR8, UQCR10/QCR9, UQCR11/QCR10 and a cleavage product of UQCRFS1). This cytochrome bc1 complex then forms a dimer.</text>
</comment>
<comment type="subcellular location">
    <subcellularLocation>
        <location evidence="2">Mitochondrion inner membrane</location>
        <topology evidence="2">Multi-pass membrane protein</topology>
    </subcellularLocation>
</comment>
<comment type="miscellaneous">
    <text evidence="1">Heme 1 (or BL or b562) is low-potential and absorbs at about 562 nm, and heme 2 (or BH or b566) is high-potential and absorbs at about 566 nm.</text>
</comment>
<comment type="similarity">
    <text evidence="3 4">Belongs to the cytochrome b family.</text>
</comment>
<comment type="caution">
    <text evidence="2">The full-length protein contains only eight transmembrane helices, not nine as predicted by bioinformatics tools.</text>
</comment>
<dbReference type="EMBL" id="AB061526">
    <property type="protein sequence ID" value="BAB70630.1"/>
    <property type="molecule type" value="Genomic_DNA"/>
</dbReference>
<dbReference type="RefSeq" id="NP_976112.1">
    <property type="nucleotide sequence ID" value="NC_005434.1"/>
</dbReference>
<dbReference type="SMR" id="Q94YE5"/>
<dbReference type="GeneID" id="2746393"/>
<dbReference type="CTD" id="4519"/>
<dbReference type="GO" id="GO:0005743">
    <property type="term" value="C:mitochondrial inner membrane"/>
    <property type="evidence" value="ECO:0007669"/>
    <property type="project" value="UniProtKB-SubCell"/>
</dbReference>
<dbReference type="GO" id="GO:0045275">
    <property type="term" value="C:respiratory chain complex III"/>
    <property type="evidence" value="ECO:0007669"/>
    <property type="project" value="InterPro"/>
</dbReference>
<dbReference type="GO" id="GO:0046872">
    <property type="term" value="F:metal ion binding"/>
    <property type="evidence" value="ECO:0007669"/>
    <property type="project" value="UniProtKB-KW"/>
</dbReference>
<dbReference type="GO" id="GO:0008121">
    <property type="term" value="F:ubiquinol-cytochrome-c reductase activity"/>
    <property type="evidence" value="ECO:0007669"/>
    <property type="project" value="InterPro"/>
</dbReference>
<dbReference type="GO" id="GO:0006122">
    <property type="term" value="P:mitochondrial electron transport, ubiquinol to cytochrome c"/>
    <property type="evidence" value="ECO:0007669"/>
    <property type="project" value="TreeGrafter"/>
</dbReference>
<dbReference type="CDD" id="cd00290">
    <property type="entry name" value="cytochrome_b_C"/>
    <property type="match status" value="1"/>
</dbReference>
<dbReference type="CDD" id="cd00284">
    <property type="entry name" value="Cytochrome_b_N"/>
    <property type="match status" value="1"/>
</dbReference>
<dbReference type="FunFam" id="1.20.810.10:FF:000002">
    <property type="entry name" value="Cytochrome b"/>
    <property type="match status" value="1"/>
</dbReference>
<dbReference type="Gene3D" id="1.20.810.10">
    <property type="entry name" value="Cytochrome Bc1 Complex, Chain C"/>
    <property type="match status" value="1"/>
</dbReference>
<dbReference type="InterPro" id="IPR005798">
    <property type="entry name" value="Cyt_b/b6_C"/>
</dbReference>
<dbReference type="InterPro" id="IPR036150">
    <property type="entry name" value="Cyt_b/b6_C_sf"/>
</dbReference>
<dbReference type="InterPro" id="IPR005797">
    <property type="entry name" value="Cyt_b/b6_N"/>
</dbReference>
<dbReference type="InterPro" id="IPR027387">
    <property type="entry name" value="Cytb/b6-like_sf"/>
</dbReference>
<dbReference type="InterPro" id="IPR030689">
    <property type="entry name" value="Cytochrome_b"/>
</dbReference>
<dbReference type="InterPro" id="IPR048260">
    <property type="entry name" value="Cytochrome_b_C_euk/bac"/>
</dbReference>
<dbReference type="InterPro" id="IPR048259">
    <property type="entry name" value="Cytochrome_b_N_euk/bac"/>
</dbReference>
<dbReference type="InterPro" id="IPR016174">
    <property type="entry name" value="Di-haem_cyt_TM"/>
</dbReference>
<dbReference type="PANTHER" id="PTHR19271">
    <property type="entry name" value="CYTOCHROME B"/>
    <property type="match status" value="1"/>
</dbReference>
<dbReference type="PANTHER" id="PTHR19271:SF16">
    <property type="entry name" value="CYTOCHROME B"/>
    <property type="match status" value="1"/>
</dbReference>
<dbReference type="Pfam" id="PF00032">
    <property type="entry name" value="Cytochrom_B_C"/>
    <property type="match status" value="1"/>
</dbReference>
<dbReference type="Pfam" id="PF00033">
    <property type="entry name" value="Cytochrome_B"/>
    <property type="match status" value="1"/>
</dbReference>
<dbReference type="PIRSF" id="PIRSF038885">
    <property type="entry name" value="COB"/>
    <property type="match status" value="1"/>
</dbReference>
<dbReference type="SUPFAM" id="SSF81648">
    <property type="entry name" value="a domain/subunit of cytochrome bc1 complex (Ubiquinol-cytochrome c reductase)"/>
    <property type="match status" value="1"/>
</dbReference>
<dbReference type="SUPFAM" id="SSF81342">
    <property type="entry name" value="Transmembrane di-heme cytochromes"/>
    <property type="match status" value="1"/>
</dbReference>
<dbReference type="PROSITE" id="PS51003">
    <property type="entry name" value="CYTB_CTER"/>
    <property type="match status" value="1"/>
</dbReference>
<dbReference type="PROSITE" id="PS51002">
    <property type="entry name" value="CYTB_NTER"/>
    <property type="match status" value="1"/>
</dbReference>
<evidence type="ECO:0000250" key="1"/>
<evidence type="ECO:0000250" key="2">
    <source>
        <dbReference type="UniProtKB" id="P00157"/>
    </source>
</evidence>
<evidence type="ECO:0000255" key="3">
    <source>
        <dbReference type="PROSITE-ProRule" id="PRU00967"/>
    </source>
</evidence>
<evidence type="ECO:0000255" key="4">
    <source>
        <dbReference type="PROSITE-ProRule" id="PRU00968"/>
    </source>
</evidence>
<protein>
    <recommendedName>
        <fullName>Cytochrome b</fullName>
    </recommendedName>
    <alternativeName>
        <fullName>Complex III subunit 3</fullName>
    </alternativeName>
    <alternativeName>
        <fullName>Complex III subunit III</fullName>
    </alternativeName>
    <alternativeName>
        <fullName>Cytochrome b-c1 complex subunit 3</fullName>
    </alternativeName>
    <alternativeName>
        <fullName>Ubiquinol-cytochrome-c reductase complex cytochrome b subunit</fullName>
    </alternativeName>
</protein>
<accession>Q94YE5</accession>
<geneLocation type="mitochondrion"/>
<keyword id="KW-0249">Electron transport</keyword>
<keyword id="KW-0349">Heme</keyword>
<keyword id="KW-0408">Iron</keyword>
<keyword id="KW-0472">Membrane</keyword>
<keyword id="KW-0479">Metal-binding</keyword>
<keyword id="KW-0496">Mitochondrion</keyword>
<keyword id="KW-0999">Mitochondrion inner membrane</keyword>
<keyword id="KW-0679">Respiratory chain</keyword>
<keyword id="KW-0812">Transmembrane</keyword>
<keyword id="KW-1133">Transmembrane helix</keyword>
<keyword id="KW-0813">Transport</keyword>
<keyword id="KW-0830">Ubiquinone</keyword>
<reference key="1">
    <citation type="journal article" date="2001" name="J. Mol. Evol.">
        <title>Maximum likelihood analysis of the complete mitochondrial genomes of eutherians and a reevaluation of the phylogeny of bats and insectivores.</title>
        <authorList>
            <person name="Nikaido M."/>
            <person name="Kawai K."/>
            <person name="Cao Y."/>
            <person name="Harada M."/>
            <person name="Tomita S."/>
            <person name="Okada N."/>
            <person name="Hasegawa M."/>
        </authorList>
    </citation>
    <scope>NUCLEOTIDE SEQUENCE [GENOMIC DNA]</scope>
</reference>
<gene>
    <name type="primary">MT-CYB</name>
    <name type="synonym">COB</name>
    <name type="synonym">CYTB</name>
    <name type="synonym">MTCYB</name>
</gene>
<sequence>MTNIRKSHPLFKIINDSFIDLPAPSSISSWWNFGSLLGVCLAVQILTGLFLAMHYTSDTATAFYSVTHICRDVNYGWVLRYLHANGASMFFICLFLHVGRGIYYGSYTFSETWNIGIILLFAVMATAFMGYVLPWGQMSFWGATVITNLLSAIPYIGTTLVEWVWGGFSVDKATLTRFFALHFLLPFIISAMVMVHLLFLHETGSNNPTGIPSDVDMIPFHPYYTIKDILGLVLMLMALLSLVLFAPDLLGDPDNYTPANPLNTPPHIKPEWYFLFAYAILRSIPNKLGGVVALVLSILVLAVIPLLHTSKQRSMTFRPLSQCLFWLLVADLLTLTWIGGQPVEHPFIIIGQLASILYFLIILVLMPLASIAENHLLKW</sequence>
<proteinExistence type="inferred from homology"/>
<feature type="chain" id="PRO_0000061500" description="Cytochrome b">
    <location>
        <begin position="1"/>
        <end position="379"/>
    </location>
</feature>
<feature type="transmembrane region" description="Helical" evidence="2">
    <location>
        <begin position="33"/>
        <end position="53"/>
    </location>
</feature>
<feature type="transmembrane region" description="Helical" evidence="2">
    <location>
        <begin position="77"/>
        <end position="98"/>
    </location>
</feature>
<feature type="transmembrane region" description="Helical" evidence="2">
    <location>
        <begin position="113"/>
        <end position="133"/>
    </location>
</feature>
<feature type="transmembrane region" description="Helical" evidence="2">
    <location>
        <begin position="178"/>
        <end position="198"/>
    </location>
</feature>
<feature type="transmembrane region" description="Helical" evidence="2">
    <location>
        <begin position="226"/>
        <end position="246"/>
    </location>
</feature>
<feature type="transmembrane region" description="Helical" evidence="2">
    <location>
        <begin position="288"/>
        <end position="308"/>
    </location>
</feature>
<feature type="transmembrane region" description="Helical" evidence="2">
    <location>
        <begin position="320"/>
        <end position="340"/>
    </location>
</feature>
<feature type="transmembrane region" description="Helical" evidence="2">
    <location>
        <begin position="347"/>
        <end position="367"/>
    </location>
</feature>
<feature type="binding site" description="axial binding residue" evidence="2">
    <location>
        <position position="83"/>
    </location>
    <ligand>
        <name>heme b</name>
        <dbReference type="ChEBI" id="CHEBI:60344"/>
        <label>b562</label>
    </ligand>
    <ligandPart>
        <name>Fe</name>
        <dbReference type="ChEBI" id="CHEBI:18248"/>
    </ligandPart>
</feature>
<feature type="binding site" description="axial binding residue" evidence="2">
    <location>
        <position position="97"/>
    </location>
    <ligand>
        <name>heme b</name>
        <dbReference type="ChEBI" id="CHEBI:60344"/>
        <label>b566</label>
    </ligand>
    <ligandPart>
        <name>Fe</name>
        <dbReference type="ChEBI" id="CHEBI:18248"/>
    </ligandPart>
</feature>
<feature type="binding site" description="axial binding residue" evidence="2">
    <location>
        <position position="182"/>
    </location>
    <ligand>
        <name>heme b</name>
        <dbReference type="ChEBI" id="CHEBI:60344"/>
        <label>b562</label>
    </ligand>
    <ligandPart>
        <name>Fe</name>
        <dbReference type="ChEBI" id="CHEBI:18248"/>
    </ligandPart>
</feature>
<feature type="binding site" description="axial binding residue" evidence="2">
    <location>
        <position position="196"/>
    </location>
    <ligand>
        <name>heme b</name>
        <dbReference type="ChEBI" id="CHEBI:60344"/>
        <label>b566</label>
    </ligand>
    <ligandPart>
        <name>Fe</name>
        <dbReference type="ChEBI" id="CHEBI:18248"/>
    </ligandPart>
</feature>
<feature type="binding site" evidence="2">
    <location>
        <position position="201"/>
    </location>
    <ligand>
        <name>a ubiquinone</name>
        <dbReference type="ChEBI" id="CHEBI:16389"/>
    </ligand>
</feature>
<name>CYB_RHIPI</name>
<organism>
    <name type="scientific">Rhinolophus pumilus</name>
    <name type="common">Horseshoe bat</name>
    <dbReference type="NCBI Taxonomy" id="159859"/>
    <lineage>
        <taxon>Eukaryota</taxon>
        <taxon>Metazoa</taxon>
        <taxon>Chordata</taxon>
        <taxon>Craniata</taxon>
        <taxon>Vertebrata</taxon>
        <taxon>Euteleostomi</taxon>
        <taxon>Mammalia</taxon>
        <taxon>Eutheria</taxon>
        <taxon>Laurasiatheria</taxon>
        <taxon>Chiroptera</taxon>
        <taxon>Yinpterochiroptera</taxon>
        <taxon>Rhinolophoidea</taxon>
        <taxon>Rhinolophidae</taxon>
        <taxon>Rhinolophinae</taxon>
        <taxon>Rhinolophus</taxon>
    </lineage>
</organism>